<keyword id="KW-0614">Plasmid</keyword>
<keyword id="KW-0749">Sporulation</keyword>
<keyword id="KW-0800">Toxin</keyword>
<keyword id="KW-0843">Virulence</keyword>
<geneLocation type="plasmid">
    <name>72 Kb</name>
</geneLocation>
<gene>
    <name type="primary">cyt1Aa</name>
    <name type="synonym">cytA</name>
</gene>
<proteinExistence type="evidence at transcript level"/>
<organism>
    <name type="scientific">Bacillus thuringiensis subsp. morrisoni</name>
    <dbReference type="NCBI Taxonomy" id="1441"/>
    <lineage>
        <taxon>Bacteria</taxon>
        <taxon>Bacillati</taxon>
        <taxon>Bacillota</taxon>
        <taxon>Bacilli</taxon>
        <taxon>Bacillales</taxon>
        <taxon>Bacillaceae</taxon>
        <taxon>Bacillus</taxon>
        <taxon>Bacillus cereus group</taxon>
    </lineage>
</organism>
<name>CT1AA_BACTM</name>
<protein>
    <recommendedName>
        <fullName>Type-1Aa cytolytic delta-endotoxin</fullName>
    </recommendedName>
    <alternativeName>
        <fullName>27 kDa cytolytic toxin</fullName>
    </alternativeName>
</protein>
<reference key="1">
    <citation type="journal article" date="1987" name="Nucleic Acids Res.">
        <title>Bacillus thuringiensis var. morrisoni strain PG14: nucleotide sequence of a gene encoding a 27kDa crystal protein.</title>
        <authorList>
            <person name="Earp D.J."/>
            <person name="Ellar D.J."/>
        </authorList>
    </citation>
    <scope>NUCLEOTIDE SEQUENCE [GENOMIC DNA]</scope>
    <source>
        <strain>PG14</strain>
    </source>
</reference>
<reference key="2">
    <citation type="journal article" date="1987" name="Curr. Microbiol.">
        <title>Plasmid location, cloning, and sequence analysis of the gene encoding a 27.3-kilodalton cytolytic protein from Bacillus thuringiensis subsp. morrisoni (PG-14).</title>
        <authorList>
            <person name="Galjart N.J."/>
            <person name="Sivasubramanian N."/>
            <person name="Federici B.A."/>
        </authorList>
    </citation>
    <scope>NUCLEOTIDE SEQUENCE [GENOMIC DNA]</scope>
    <source>
        <strain>PG14</strain>
    </source>
</reference>
<evidence type="ECO:0000305" key="1"/>
<sequence length="249" mass="27315">MENLNHCPLEDIKVNPWKTPQSTARVITLRVEDPNEINNLLSINEIDNPNYILQAIMLANAFQNALVPTSTDFGDALRFSMAKGLEIANTITPMGAVVSYVDQNVTQTNNQVSVMINKVLEVLKTVLGVALSGSVIDQLTAAVTNTFTNLNTQKNEAWIFWGKETANQTNYTYNVLFAIQNAQTGGVMYCVPVGFEIKVSAVKEQVLFFTIQDSASYNVNIQSLKFAQPLVSSSQYPIADLTSAINGTL</sequence>
<dbReference type="EMBL" id="Y00135">
    <property type="protein sequence ID" value="CAA68329.1"/>
    <property type="molecule type" value="Genomic_DNA"/>
</dbReference>
<dbReference type="EMBL" id="M35968">
    <property type="protein sequence ID" value="AAA22553.1"/>
    <property type="molecule type" value="Genomic_DNA"/>
</dbReference>
<dbReference type="PIR" id="A27520">
    <property type="entry name" value="A27520"/>
</dbReference>
<dbReference type="SMR" id="P0A383"/>
<dbReference type="GO" id="GO:0005576">
    <property type="term" value="C:extracellular region"/>
    <property type="evidence" value="ECO:0007669"/>
    <property type="project" value="InterPro"/>
</dbReference>
<dbReference type="GO" id="GO:0090729">
    <property type="term" value="F:toxin activity"/>
    <property type="evidence" value="ECO:0007669"/>
    <property type="project" value="UniProtKB-KW"/>
</dbReference>
<dbReference type="GO" id="GO:0030435">
    <property type="term" value="P:sporulation resulting in formation of a cellular spore"/>
    <property type="evidence" value="ECO:0007669"/>
    <property type="project" value="UniProtKB-KW"/>
</dbReference>
<dbReference type="Gene3D" id="3.40.198.10">
    <property type="entry name" value="Delta-endotoxin CytB-like"/>
    <property type="match status" value="1"/>
</dbReference>
<dbReference type="InterPro" id="IPR035918">
    <property type="entry name" value="CytB_endotoxin-like_sf"/>
</dbReference>
<dbReference type="InterPro" id="IPR001615">
    <property type="entry name" value="Endotoxin_CytB"/>
</dbReference>
<dbReference type="Pfam" id="PF01338">
    <property type="entry name" value="Bac_thur_toxin"/>
    <property type="match status" value="1"/>
</dbReference>
<dbReference type="SUPFAM" id="SSF55676">
    <property type="entry name" value="CytB endotoxin-like"/>
    <property type="match status" value="1"/>
</dbReference>
<comment type="function">
    <text>Kills the larvae of dipteran insects by making pores in the epithelial cell membrane of the insect midgut. Acts on mosquitos and black flies.</text>
</comment>
<comment type="developmental stage">
    <text>The crystal protein is produced during sporulation and is accumulated both as an inclusion and as part of the spore coat.</text>
</comment>
<comment type="PTM">
    <text>Active after proteolytic processing.</text>
</comment>
<comment type="similarity">
    <text evidence="1">Belongs to the cyt1/cyt2 endotoxin family.</text>
</comment>
<accession>P0A383</accession>
<accession>P05069</accession>
<accession>P05628</accession>
<feature type="chain" id="PRO_0000174105" description="Type-1Aa cytolytic delta-endotoxin">
    <location>
        <begin position="1"/>
        <end position="249"/>
    </location>
</feature>